<accession>P21881</accession>
<accession>Q59227</accession>
<feature type="initiator methionine" description="Removed" evidence="2">
    <location>
        <position position="1"/>
    </location>
</feature>
<feature type="chain" id="PRO_0000162199" description="Pyruvate dehydrogenase E1 component subunit alpha">
    <location>
        <begin position="2"/>
        <end position="371"/>
    </location>
</feature>
<feature type="sequence conflict" description="In Ref. 1; AAA62681." evidence="4" ref="1">
    <original>A</original>
    <variation>R</variation>
    <location>
        <position position="179"/>
    </location>
</feature>
<reference key="1">
    <citation type="journal article" date="1990" name="J. Bacteriol.">
        <title>Secretory S complex of Bacillus subtilis: sequence analysis and identity to pyruvate dehydrogenase.</title>
        <authorList>
            <person name="Hemilae H.O."/>
            <person name="Palva A."/>
            <person name="Paulin L."/>
            <person name="Arvidson S."/>
            <person name="Palva I."/>
        </authorList>
    </citation>
    <scope>NUCLEOTIDE SEQUENCE [GENOMIC DNA]</scope>
    <source>
        <strain>168</strain>
    </source>
</reference>
<reference key="2">
    <citation type="journal article" date="1996" name="Microbiology">
        <title>The ampS-nprE (124 degrees-127 degrees) region of the Bacillus subtilis 168 chromosome: sequencing of a 27 kb segment and identification of several genes in the area.</title>
        <authorList>
            <person name="Winters P."/>
            <person name="Caldwell R.M."/>
            <person name="Enfield L."/>
            <person name="Ferrari E."/>
        </authorList>
    </citation>
    <scope>NUCLEOTIDE SEQUENCE [GENOMIC DNA]</scope>
    <source>
        <strain>168</strain>
    </source>
</reference>
<reference key="3">
    <citation type="submission" date="1997-07" db="EMBL/GenBank/DDBJ databases">
        <title>Sequence analysis of the mobA-ampS region of the Bacillus subtilis chromosome.</title>
        <authorList>
            <person name="Caldwell R.M."/>
            <person name="Ferrari E."/>
        </authorList>
    </citation>
    <scope>NUCLEOTIDE SEQUENCE [GENOMIC DNA]</scope>
    <source>
        <strain>168</strain>
    </source>
</reference>
<reference key="4">
    <citation type="journal article" date="1997" name="Nature">
        <title>The complete genome sequence of the Gram-positive bacterium Bacillus subtilis.</title>
        <authorList>
            <person name="Kunst F."/>
            <person name="Ogasawara N."/>
            <person name="Moszer I."/>
            <person name="Albertini A.M."/>
            <person name="Alloni G."/>
            <person name="Azevedo V."/>
            <person name="Bertero M.G."/>
            <person name="Bessieres P."/>
            <person name="Bolotin A."/>
            <person name="Borchert S."/>
            <person name="Borriss R."/>
            <person name="Boursier L."/>
            <person name="Brans A."/>
            <person name="Braun M."/>
            <person name="Brignell S.C."/>
            <person name="Bron S."/>
            <person name="Brouillet S."/>
            <person name="Bruschi C.V."/>
            <person name="Caldwell B."/>
            <person name="Capuano V."/>
            <person name="Carter N.M."/>
            <person name="Choi S.-K."/>
            <person name="Codani J.-J."/>
            <person name="Connerton I.F."/>
            <person name="Cummings N.J."/>
            <person name="Daniel R.A."/>
            <person name="Denizot F."/>
            <person name="Devine K.M."/>
            <person name="Duesterhoeft A."/>
            <person name="Ehrlich S.D."/>
            <person name="Emmerson P.T."/>
            <person name="Entian K.-D."/>
            <person name="Errington J."/>
            <person name="Fabret C."/>
            <person name="Ferrari E."/>
            <person name="Foulger D."/>
            <person name="Fritz C."/>
            <person name="Fujita M."/>
            <person name="Fujita Y."/>
            <person name="Fuma S."/>
            <person name="Galizzi A."/>
            <person name="Galleron N."/>
            <person name="Ghim S.-Y."/>
            <person name="Glaser P."/>
            <person name="Goffeau A."/>
            <person name="Golightly E.J."/>
            <person name="Grandi G."/>
            <person name="Guiseppi G."/>
            <person name="Guy B.J."/>
            <person name="Haga K."/>
            <person name="Haiech J."/>
            <person name="Harwood C.R."/>
            <person name="Henaut A."/>
            <person name="Hilbert H."/>
            <person name="Holsappel S."/>
            <person name="Hosono S."/>
            <person name="Hullo M.-F."/>
            <person name="Itaya M."/>
            <person name="Jones L.-M."/>
            <person name="Joris B."/>
            <person name="Karamata D."/>
            <person name="Kasahara Y."/>
            <person name="Klaerr-Blanchard M."/>
            <person name="Klein C."/>
            <person name="Kobayashi Y."/>
            <person name="Koetter P."/>
            <person name="Koningstein G."/>
            <person name="Krogh S."/>
            <person name="Kumano M."/>
            <person name="Kurita K."/>
            <person name="Lapidus A."/>
            <person name="Lardinois S."/>
            <person name="Lauber J."/>
            <person name="Lazarevic V."/>
            <person name="Lee S.-M."/>
            <person name="Levine A."/>
            <person name="Liu H."/>
            <person name="Masuda S."/>
            <person name="Mauel C."/>
            <person name="Medigue C."/>
            <person name="Medina N."/>
            <person name="Mellado R.P."/>
            <person name="Mizuno M."/>
            <person name="Moestl D."/>
            <person name="Nakai S."/>
            <person name="Noback M."/>
            <person name="Noone D."/>
            <person name="O'Reilly M."/>
            <person name="Ogawa K."/>
            <person name="Ogiwara A."/>
            <person name="Oudega B."/>
            <person name="Park S.-H."/>
            <person name="Parro V."/>
            <person name="Pohl T.M."/>
            <person name="Portetelle D."/>
            <person name="Porwollik S."/>
            <person name="Prescott A.M."/>
            <person name="Presecan E."/>
            <person name="Pujic P."/>
            <person name="Purnelle B."/>
            <person name="Rapoport G."/>
            <person name="Rey M."/>
            <person name="Reynolds S."/>
            <person name="Rieger M."/>
            <person name="Rivolta C."/>
            <person name="Rocha E."/>
            <person name="Roche B."/>
            <person name="Rose M."/>
            <person name="Sadaie Y."/>
            <person name="Sato T."/>
            <person name="Scanlan E."/>
            <person name="Schleich S."/>
            <person name="Schroeter R."/>
            <person name="Scoffone F."/>
            <person name="Sekiguchi J."/>
            <person name="Sekowska A."/>
            <person name="Seror S.J."/>
            <person name="Serror P."/>
            <person name="Shin B.-S."/>
            <person name="Soldo B."/>
            <person name="Sorokin A."/>
            <person name="Tacconi E."/>
            <person name="Takagi T."/>
            <person name="Takahashi H."/>
            <person name="Takemaru K."/>
            <person name="Takeuchi M."/>
            <person name="Tamakoshi A."/>
            <person name="Tanaka T."/>
            <person name="Terpstra P."/>
            <person name="Tognoni A."/>
            <person name="Tosato V."/>
            <person name="Uchiyama S."/>
            <person name="Vandenbol M."/>
            <person name="Vannier F."/>
            <person name="Vassarotti A."/>
            <person name="Viari A."/>
            <person name="Wambutt R."/>
            <person name="Wedler E."/>
            <person name="Wedler H."/>
            <person name="Weitzenegger T."/>
            <person name="Winters P."/>
            <person name="Wipat A."/>
            <person name="Yamamoto H."/>
            <person name="Yamane K."/>
            <person name="Yasumoto K."/>
            <person name="Yata K."/>
            <person name="Yoshida K."/>
            <person name="Yoshikawa H.-F."/>
            <person name="Zumstein E."/>
            <person name="Yoshikawa H."/>
            <person name="Danchin A."/>
        </authorList>
    </citation>
    <scope>NUCLEOTIDE SEQUENCE [LARGE SCALE GENOMIC DNA]</scope>
    <source>
        <strain>168</strain>
    </source>
</reference>
<reference key="5">
    <citation type="journal article" date="1997" name="Electrophoresis">
        <title>First steps from a two-dimensional protein index towards a response-regulation map for Bacillus subtilis.</title>
        <authorList>
            <person name="Antelmann H."/>
            <person name="Bernhardt J."/>
            <person name="Schmid R."/>
            <person name="Mach H."/>
            <person name="Voelker U."/>
            <person name="Hecker M."/>
        </authorList>
    </citation>
    <scope>PROTEIN SEQUENCE OF 2-16</scope>
    <source>
        <strain>168 / IS58</strain>
    </source>
</reference>
<reference key="6">
    <citation type="journal article" date="2023" name="Mol. Syst. Biol.">
        <title>Protein complexes in cells by AI-assisted structural proteomics.</title>
        <authorList>
            <person name="O'Reilly F.J."/>
            <person name="Graziadei A."/>
            <person name="Forbrig C."/>
            <person name="Bremenkamp R."/>
            <person name="Charles K."/>
            <person name="Lenz S."/>
            <person name="Elfmann C."/>
            <person name="Fischer L."/>
            <person name="Stuelke J."/>
            <person name="Rappsilber J."/>
        </authorList>
    </citation>
    <scope>ACTIVITY REGULATION</scope>
    <source>
        <strain>168</strain>
    </source>
</reference>
<name>ODPA_BACSU</name>
<protein>
    <recommendedName>
        <fullName>Pyruvate dehydrogenase E1 component subunit alpha</fullName>
        <ecNumber>1.2.4.1</ecNumber>
    </recommendedName>
    <alternativeName>
        <fullName>S complex, 42 kDa subunit</fullName>
    </alternativeName>
    <alternativeName>
        <fullName>Vegetative protein 220</fullName>
        <shortName>VEG220</shortName>
    </alternativeName>
</protein>
<dbReference type="EC" id="1.2.4.1"/>
<dbReference type="EMBL" id="M57435">
    <property type="protein sequence ID" value="AAA62681.1"/>
    <property type="molecule type" value="Genomic_DNA"/>
</dbReference>
<dbReference type="EMBL" id="AF012285">
    <property type="protein sequence ID" value="AAC24932.1"/>
    <property type="molecule type" value="Genomic_DNA"/>
</dbReference>
<dbReference type="EMBL" id="AL009126">
    <property type="protein sequence ID" value="CAB13331.1"/>
    <property type="molecule type" value="Genomic_DNA"/>
</dbReference>
<dbReference type="PIR" id="B36718">
    <property type="entry name" value="DEBSPA"/>
</dbReference>
<dbReference type="RefSeq" id="NP_389341.1">
    <property type="nucleotide sequence ID" value="NC_000964.3"/>
</dbReference>
<dbReference type="RefSeq" id="WP_003222294.1">
    <property type="nucleotide sequence ID" value="NZ_OZ025638.1"/>
</dbReference>
<dbReference type="SMR" id="P21881"/>
<dbReference type="FunCoup" id="P21881">
    <property type="interactions" value="332"/>
</dbReference>
<dbReference type="IntAct" id="P21881">
    <property type="interactions" value="1"/>
</dbReference>
<dbReference type="MINT" id="P21881"/>
<dbReference type="STRING" id="224308.BSU14580"/>
<dbReference type="jPOST" id="P21881"/>
<dbReference type="PaxDb" id="224308-BSU14580"/>
<dbReference type="EnsemblBacteria" id="CAB13331">
    <property type="protein sequence ID" value="CAB13331"/>
    <property type="gene ID" value="BSU_14580"/>
</dbReference>
<dbReference type="GeneID" id="86874035"/>
<dbReference type="GeneID" id="936005"/>
<dbReference type="KEGG" id="bsu:BSU14580"/>
<dbReference type="PATRIC" id="fig|224308.179.peg.1590"/>
<dbReference type="eggNOG" id="COG1071">
    <property type="taxonomic scope" value="Bacteria"/>
</dbReference>
<dbReference type="InParanoid" id="P21881"/>
<dbReference type="OrthoDB" id="9766715at2"/>
<dbReference type="PhylomeDB" id="P21881"/>
<dbReference type="BioCyc" id="BSUB:BSU14580-MONOMER"/>
<dbReference type="PRO" id="PR:P21881"/>
<dbReference type="Proteomes" id="UP000001570">
    <property type="component" value="Chromosome"/>
</dbReference>
<dbReference type="GO" id="GO:0004739">
    <property type="term" value="F:pyruvate dehydrogenase (acetyl-transferring) activity"/>
    <property type="evidence" value="ECO:0000318"/>
    <property type="project" value="GO_Central"/>
</dbReference>
<dbReference type="GO" id="GO:0006086">
    <property type="term" value="P:pyruvate decarboxylation to acetyl-CoA"/>
    <property type="evidence" value="ECO:0000318"/>
    <property type="project" value="GO_Central"/>
</dbReference>
<dbReference type="CDD" id="cd02000">
    <property type="entry name" value="TPP_E1_PDC_ADC_BCADC"/>
    <property type="match status" value="1"/>
</dbReference>
<dbReference type="FunFam" id="3.40.50.970:FF:000023">
    <property type="entry name" value="Pyruvate dehydrogenase E1 component subunit alpha"/>
    <property type="match status" value="1"/>
</dbReference>
<dbReference type="Gene3D" id="3.40.50.970">
    <property type="match status" value="1"/>
</dbReference>
<dbReference type="InterPro" id="IPR050771">
    <property type="entry name" value="Alpha-ketoacid_DH_E1_comp"/>
</dbReference>
<dbReference type="InterPro" id="IPR001017">
    <property type="entry name" value="DH_E1"/>
</dbReference>
<dbReference type="InterPro" id="IPR017596">
    <property type="entry name" value="PdhA/BkdA"/>
</dbReference>
<dbReference type="InterPro" id="IPR029061">
    <property type="entry name" value="THDP-binding"/>
</dbReference>
<dbReference type="NCBIfam" id="TIGR03181">
    <property type="entry name" value="PDH_E1_alph_x"/>
    <property type="match status" value="1"/>
</dbReference>
<dbReference type="PANTHER" id="PTHR43380">
    <property type="entry name" value="2-OXOISOVALERATE DEHYDROGENASE SUBUNIT ALPHA, MITOCHONDRIAL"/>
    <property type="match status" value="1"/>
</dbReference>
<dbReference type="PANTHER" id="PTHR43380:SF1">
    <property type="entry name" value="2-OXOISOVALERATE DEHYDROGENASE SUBUNIT ALPHA, MITOCHONDRIAL"/>
    <property type="match status" value="1"/>
</dbReference>
<dbReference type="Pfam" id="PF00676">
    <property type="entry name" value="E1_dh"/>
    <property type="match status" value="1"/>
</dbReference>
<dbReference type="SUPFAM" id="SSF52518">
    <property type="entry name" value="Thiamin diphosphate-binding fold (THDP-binding)"/>
    <property type="match status" value="1"/>
</dbReference>
<organism>
    <name type="scientific">Bacillus subtilis (strain 168)</name>
    <dbReference type="NCBI Taxonomy" id="224308"/>
    <lineage>
        <taxon>Bacteria</taxon>
        <taxon>Bacillati</taxon>
        <taxon>Bacillota</taxon>
        <taxon>Bacilli</taxon>
        <taxon>Bacillales</taxon>
        <taxon>Bacillaceae</taxon>
        <taxon>Bacillus</taxon>
    </lineage>
</organism>
<proteinExistence type="evidence at protein level"/>
<evidence type="ECO:0000269" key="1">
    <source>
    </source>
</evidence>
<evidence type="ECO:0000269" key="2">
    <source>
    </source>
</evidence>
<evidence type="ECO:0000303" key="3">
    <source>
    </source>
</evidence>
<evidence type="ECO:0000305" key="4"/>
<evidence type="ECO:0000312" key="5">
    <source>
        <dbReference type="EMBL" id="CAB13331.1"/>
    </source>
</evidence>
<sequence length="371" mass="41548">MAAKTKKAIVDSKKQFDAIKKQFETFQILNEKGEVVNEAAMPDLTDDQLKELMRRMVFTRVLDQRSISLNRQGRLGFYAPTAGQEASQIATHFALEKEDFVLPGYRDVPQLIWHGLPLYQAFLFSRGHFRGNQMPDDVNALSPQIIIGAQYIQTAGVALGLKKRGKKAVAITYTGDGGASQGDFYEGINFAGAYKAPAIFVVQNNRYAISTPVEKQSAAETIAQKAVAAGIVGVQVDGMDPLAVYAATAEARERAINGEGPTLIETLTFRYGPHTMAGDDPTKYRTKEIENEWEQKDPLVRFRAFLENKGLWSEEEEAKVIEDAKEEIKQAIKKADAEPKQKVTDLMKIMYEKMPHNLEEQFEIYTQKESK</sequence>
<comment type="function">
    <text>The pyruvate dehydrogenase complex catalyzes the overall conversion of pyruvate to acetyl-CoA and CO(2). It contains multiple copies of three enzymatic components: pyruvate dehydrogenase (E1), dihydrolipoamide acetyltransferase (E2) and lipoamide dehydrogenase (E3).</text>
</comment>
<comment type="function">
    <text>The B.subtilis PDH complex also possesses branched-chain 2-oxoacid dehydrogenase (BCDH) activity.</text>
</comment>
<comment type="catalytic activity">
    <reaction>
        <text>N(6)-[(R)-lipoyl]-L-lysyl-[protein] + pyruvate + H(+) = N(6)-[(R)-S(8)-acetyldihydrolipoyl]-L-lysyl-[protein] + CO2</text>
        <dbReference type="Rhea" id="RHEA:19189"/>
        <dbReference type="Rhea" id="RHEA-COMP:10474"/>
        <dbReference type="Rhea" id="RHEA-COMP:10478"/>
        <dbReference type="ChEBI" id="CHEBI:15361"/>
        <dbReference type="ChEBI" id="CHEBI:15378"/>
        <dbReference type="ChEBI" id="CHEBI:16526"/>
        <dbReference type="ChEBI" id="CHEBI:83099"/>
        <dbReference type="ChEBI" id="CHEBI:83111"/>
        <dbReference type="EC" id="1.2.4.1"/>
    </reaction>
</comment>
<comment type="cofactor">
    <cofactor>
        <name>thiamine diphosphate</name>
        <dbReference type="ChEBI" id="CHEBI:58937"/>
    </cofactor>
</comment>
<comment type="activity regulation">
    <text evidence="1">Activity of the E1 module is inhibited by the pyruvate dehydrogenase inhibitor PdhI.</text>
</comment>
<comment type="subunit">
    <text>Heterodimer of an alpha and a beta chain.</text>
</comment>
<keyword id="KW-0903">Direct protein sequencing</keyword>
<keyword id="KW-0560">Oxidoreductase</keyword>
<keyword id="KW-0670">Pyruvate</keyword>
<keyword id="KW-1185">Reference proteome</keyword>
<keyword id="KW-0786">Thiamine pyrophosphate</keyword>
<gene>
    <name evidence="3" type="primary">pdhA</name>
    <name type="synonym">aceA</name>
    <name evidence="5" type="ordered locus">BSU14580</name>
</gene>